<accession>A5PJK0</accession>
<name>SPB10_BOVIN</name>
<proteinExistence type="evidence at transcript level"/>
<evidence type="ECO:0000250" key="1"/>
<evidence type="ECO:0000305" key="2"/>
<dbReference type="EMBL" id="BC142142">
    <property type="protein sequence ID" value="AAI42143.1"/>
    <property type="molecule type" value="mRNA"/>
</dbReference>
<dbReference type="RefSeq" id="NP_001092395.1">
    <property type="nucleotide sequence ID" value="NM_001098925.1"/>
</dbReference>
<dbReference type="SMR" id="A5PJK0"/>
<dbReference type="FunCoup" id="A5PJK0">
    <property type="interactions" value="352"/>
</dbReference>
<dbReference type="STRING" id="9913.ENSBTAP00000001458"/>
<dbReference type="MEROPS" id="I04.015"/>
<dbReference type="PaxDb" id="9913-ENSBTAP00000001458"/>
<dbReference type="GeneID" id="510205"/>
<dbReference type="KEGG" id="bta:510205"/>
<dbReference type="CTD" id="5273"/>
<dbReference type="VEuPathDB" id="HostDB:ENSBTAG00000001102"/>
<dbReference type="eggNOG" id="KOG2392">
    <property type="taxonomic scope" value="Eukaryota"/>
</dbReference>
<dbReference type="HOGENOM" id="CLU_023330_0_2_1"/>
<dbReference type="InParanoid" id="A5PJK0"/>
<dbReference type="OMA" id="THEDMME"/>
<dbReference type="OrthoDB" id="671595at2759"/>
<dbReference type="TreeFam" id="TF352619"/>
<dbReference type="Reactome" id="R-BTA-6798695">
    <property type="pathway name" value="Neutrophil degranulation"/>
</dbReference>
<dbReference type="Proteomes" id="UP000009136">
    <property type="component" value="Chromosome 24"/>
</dbReference>
<dbReference type="Bgee" id="ENSBTAG00000001102">
    <property type="expression patterns" value="Expressed in ruminant reticulum and 31 other cell types or tissues"/>
</dbReference>
<dbReference type="GO" id="GO:0005737">
    <property type="term" value="C:cytoplasm"/>
    <property type="evidence" value="ECO:0007669"/>
    <property type="project" value="UniProtKB-SubCell"/>
</dbReference>
<dbReference type="GO" id="GO:0005615">
    <property type="term" value="C:extracellular space"/>
    <property type="evidence" value="ECO:0000318"/>
    <property type="project" value="GO_Central"/>
</dbReference>
<dbReference type="GO" id="GO:0005634">
    <property type="term" value="C:nucleus"/>
    <property type="evidence" value="ECO:0007669"/>
    <property type="project" value="UniProtKB-SubCell"/>
</dbReference>
<dbReference type="GO" id="GO:0004867">
    <property type="term" value="F:serine-type endopeptidase inhibitor activity"/>
    <property type="evidence" value="ECO:0000318"/>
    <property type="project" value="GO_Central"/>
</dbReference>
<dbReference type="CDD" id="cd19569">
    <property type="entry name" value="serpinB10_bomapin"/>
    <property type="match status" value="1"/>
</dbReference>
<dbReference type="FunFam" id="2.30.39.10:FF:000035">
    <property type="entry name" value="Serine protease inhibitor (serpin) 16"/>
    <property type="match status" value="1"/>
</dbReference>
<dbReference type="FunFam" id="2.10.310.10:FF:000001">
    <property type="entry name" value="Serpin family A member 1"/>
    <property type="match status" value="1"/>
</dbReference>
<dbReference type="FunFam" id="3.30.497.10:FF:000004">
    <property type="entry name" value="Serpin family B member 1"/>
    <property type="match status" value="1"/>
</dbReference>
<dbReference type="FunFam" id="2.30.39.10:FF:000001">
    <property type="entry name" value="Serpin family B member 2"/>
    <property type="match status" value="1"/>
</dbReference>
<dbReference type="Gene3D" id="2.30.39.10">
    <property type="entry name" value="Alpha-1-antitrypsin, domain 1"/>
    <property type="match status" value="1"/>
</dbReference>
<dbReference type="Gene3D" id="3.30.497.10">
    <property type="entry name" value="Antithrombin, subunit I, domain 2"/>
    <property type="match status" value="1"/>
</dbReference>
<dbReference type="InterPro" id="IPR023795">
    <property type="entry name" value="Serpin_CS"/>
</dbReference>
<dbReference type="InterPro" id="IPR023796">
    <property type="entry name" value="Serpin_dom"/>
</dbReference>
<dbReference type="InterPro" id="IPR000215">
    <property type="entry name" value="Serpin_fam"/>
</dbReference>
<dbReference type="InterPro" id="IPR036186">
    <property type="entry name" value="Serpin_sf"/>
</dbReference>
<dbReference type="InterPro" id="IPR042178">
    <property type="entry name" value="Serpin_sf_1"/>
</dbReference>
<dbReference type="InterPro" id="IPR042185">
    <property type="entry name" value="Serpin_sf_2"/>
</dbReference>
<dbReference type="PANTHER" id="PTHR11461">
    <property type="entry name" value="SERINE PROTEASE INHIBITOR, SERPIN"/>
    <property type="match status" value="1"/>
</dbReference>
<dbReference type="PANTHER" id="PTHR11461:SF175">
    <property type="entry name" value="SERPIN B10"/>
    <property type="match status" value="1"/>
</dbReference>
<dbReference type="Pfam" id="PF00079">
    <property type="entry name" value="Serpin"/>
    <property type="match status" value="1"/>
</dbReference>
<dbReference type="SMART" id="SM00093">
    <property type="entry name" value="SERPIN"/>
    <property type="match status" value="1"/>
</dbReference>
<dbReference type="SUPFAM" id="SSF56574">
    <property type="entry name" value="Serpins"/>
    <property type="match status" value="1"/>
</dbReference>
<dbReference type="PROSITE" id="PS00284">
    <property type="entry name" value="SERPIN"/>
    <property type="match status" value="1"/>
</dbReference>
<reference key="1">
    <citation type="submission" date="2007-06" db="EMBL/GenBank/DDBJ databases">
        <authorList>
            <consortium name="NIH - Mammalian Gene Collection (MGC) project"/>
        </authorList>
    </citation>
    <scope>NUCLEOTIDE SEQUENCE [LARGE SCALE MRNA]</scope>
    <source>
        <strain>Hereford</strain>
        <tissue>Fetal skin</tissue>
    </source>
</reference>
<sequence length="397" mass="45196">MDFLAKSINQFALEFSKKLAESAEGKNIFFSPWGISASLAMVYLGTKGTTAAQMAQVLQFSRDQDSKFCPDSEKKRKMEFNVGKPEEIYSDFQTLISEINSSSHACILKTANRIYGEKTFPFHKKYLEDVKTYFGAEPQSVNFIGASDQIRKEINSWVEKQTEGKILNLLPDDAVDPTTRMVLVNALYFKGVWEHQFLVQNTTEKSFKINKTTSKPVQMMSMKEKLQVFYIESPQAMGLQLYYESRDLSLLILLPEDVDGLDQLEKTITYEKLSEWTSADMMELCNVQLNLPKFKLEETYDLKSTLSSMGMSDAFNQSKADFSGMSSERNLFLSNVFHKCFVEINEQGTEAAAGTGSEVSVRMKLPSIEFNADHPFLFFIRHNKTNGILFYGRFCSP</sequence>
<keyword id="KW-0963">Cytoplasm</keyword>
<keyword id="KW-0539">Nucleus</keyword>
<keyword id="KW-0646">Protease inhibitor</keyword>
<keyword id="KW-1185">Reference proteome</keyword>
<keyword id="KW-0722">Serine protease inhibitor</keyword>
<comment type="function">
    <text evidence="1">Protease inhibitor that may play a role in the regulation of protease activities during hematopoiesis and apoptosis induced by TNF. May regulate protease activities in the cytoplasm and in the nucleus (By similarity).</text>
</comment>
<comment type="subcellular location">
    <subcellularLocation>
        <location evidence="1">Nucleus</location>
    </subcellularLocation>
    <subcellularLocation>
        <location evidence="1">Cytoplasm</location>
    </subcellularLocation>
</comment>
<comment type="similarity">
    <text evidence="2">Belongs to the serpin family. Ov-serpin subfamily.</text>
</comment>
<organism>
    <name type="scientific">Bos taurus</name>
    <name type="common">Bovine</name>
    <dbReference type="NCBI Taxonomy" id="9913"/>
    <lineage>
        <taxon>Eukaryota</taxon>
        <taxon>Metazoa</taxon>
        <taxon>Chordata</taxon>
        <taxon>Craniata</taxon>
        <taxon>Vertebrata</taxon>
        <taxon>Euteleostomi</taxon>
        <taxon>Mammalia</taxon>
        <taxon>Eutheria</taxon>
        <taxon>Laurasiatheria</taxon>
        <taxon>Artiodactyla</taxon>
        <taxon>Ruminantia</taxon>
        <taxon>Pecora</taxon>
        <taxon>Bovidae</taxon>
        <taxon>Bovinae</taxon>
        <taxon>Bos</taxon>
    </lineage>
</organism>
<feature type="chain" id="PRO_0000355544" description="Serpin B10">
    <location>
        <begin position="1"/>
        <end position="397"/>
    </location>
</feature>
<feature type="short sequence motif" description="Nuclear localization signal" evidence="1">
    <location>
        <begin position="74"/>
        <end position="77"/>
    </location>
</feature>
<feature type="site" description="Reactive bond" evidence="1">
    <location>
        <begin position="362"/>
        <end position="363"/>
    </location>
</feature>
<protein>
    <recommendedName>
        <fullName>Serpin B10</fullName>
    </recommendedName>
</protein>
<gene>
    <name type="primary">SERPINB10</name>
</gene>